<feature type="signal peptide" evidence="1">
    <location>
        <begin position="1"/>
        <end position="19"/>
    </location>
</feature>
<feature type="chain" id="PRO_1000071823" description="Outer-membrane lipoprotein carrier protein">
    <location>
        <begin position="20"/>
        <end position="205"/>
    </location>
</feature>
<reference key="1">
    <citation type="journal article" date="2007" name="PLoS ONE">
        <title>Genome sequencing shows that European isolates of Francisella tularensis subspecies tularensis are almost identical to US laboratory strain Schu S4.</title>
        <authorList>
            <person name="Chaudhuri R.R."/>
            <person name="Ren C.-P."/>
            <person name="Desmond L."/>
            <person name="Vincent G.A."/>
            <person name="Silman N.J."/>
            <person name="Brehm J.K."/>
            <person name="Elmore M.J."/>
            <person name="Hudson M.J."/>
            <person name="Forsman M."/>
            <person name="Isherwood K.E."/>
            <person name="Gurycova D."/>
            <person name="Minton N.P."/>
            <person name="Titball R.W."/>
            <person name="Pallen M.J."/>
            <person name="Vipond R."/>
        </authorList>
    </citation>
    <scope>NUCLEOTIDE SEQUENCE [LARGE SCALE GENOMIC DNA]</scope>
    <source>
        <strain>FSC 198</strain>
    </source>
</reference>
<evidence type="ECO:0000255" key="1">
    <source>
        <dbReference type="HAMAP-Rule" id="MF_00240"/>
    </source>
</evidence>
<sequence>MKKIIICFIFVFSINVSFADATSELIDKIKNIHSMTANFNQKLIDGQTNNNLNSKGNMSLKKPQYFKWITTSPNNQEIVSNGTKLWIYDGDLDQLIIKKVSNDIAQFPYLILLSKNTNNINKLFTVTAQDNNSYILKPKNDQMIDSIKIKFTPNNQLEYLEISTSLNQFTKIEFNNVKTDVDISNTSFDFKAPQNTDIIDETKFA</sequence>
<organism>
    <name type="scientific">Francisella tularensis subsp. tularensis (strain FSC 198)</name>
    <dbReference type="NCBI Taxonomy" id="393115"/>
    <lineage>
        <taxon>Bacteria</taxon>
        <taxon>Pseudomonadati</taxon>
        <taxon>Pseudomonadota</taxon>
        <taxon>Gammaproteobacteria</taxon>
        <taxon>Thiotrichales</taxon>
        <taxon>Francisellaceae</taxon>
        <taxon>Francisella</taxon>
    </lineage>
</organism>
<proteinExistence type="inferred from homology"/>
<comment type="function">
    <text evidence="1">Participates in the translocation of lipoproteins from the inner membrane to the outer membrane. Only forms a complex with a lipoprotein if the residue after the N-terminal Cys is not an aspartate (The Asp acts as a targeting signal to indicate that the lipoprotein should stay in the inner membrane).</text>
</comment>
<comment type="subunit">
    <text evidence="1">Monomer.</text>
</comment>
<comment type="subcellular location">
    <subcellularLocation>
        <location evidence="1">Periplasm</location>
    </subcellularLocation>
</comment>
<comment type="similarity">
    <text evidence="1">Belongs to the LolA family.</text>
</comment>
<keyword id="KW-0143">Chaperone</keyword>
<keyword id="KW-0574">Periplasm</keyword>
<keyword id="KW-0653">Protein transport</keyword>
<keyword id="KW-0732">Signal</keyword>
<keyword id="KW-0813">Transport</keyword>
<gene>
    <name evidence="1" type="primary">lolA</name>
    <name type="ordered locus">FTF1636</name>
</gene>
<protein>
    <recommendedName>
        <fullName evidence="1">Outer-membrane lipoprotein carrier protein</fullName>
    </recommendedName>
</protein>
<accession>Q14FZ6</accession>
<dbReference type="EMBL" id="AM286280">
    <property type="protein sequence ID" value="CAL09652.1"/>
    <property type="molecule type" value="Genomic_DNA"/>
</dbReference>
<dbReference type="RefSeq" id="WP_003022568.1">
    <property type="nucleotide sequence ID" value="NC_008245.1"/>
</dbReference>
<dbReference type="SMR" id="Q14FZ6"/>
<dbReference type="KEGG" id="ftf:FTF1636"/>
<dbReference type="HOGENOM" id="CLU_087560_0_0_6"/>
<dbReference type="GO" id="GO:0030288">
    <property type="term" value="C:outer membrane-bounded periplasmic space"/>
    <property type="evidence" value="ECO:0007669"/>
    <property type="project" value="TreeGrafter"/>
</dbReference>
<dbReference type="GO" id="GO:0044874">
    <property type="term" value="P:lipoprotein localization to outer membrane"/>
    <property type="evidence" value="ECO:0007669"/>
    <property type="project" value="UniProtKB-UniRule"/>
</dbReference>
<dbReference type="GO" id="GO:0042953">
    <property type="term" value="P:lipoprotein transport"/>
    <property type="evidence" value="ECO:0007669"/>
    <property type="project" value="InterPro"/>
</dbReference>
<dbReference type="CDD" id="cd16325">
    <property type="entry name" value="LolA"/>
    <property type="match status" value="1"/>
</dbReference>
<dbReference type="Gene3D" id="2.50.20.10">
    <property type="entry name" value="Lipoprotein localisation LolA/LolB/LppX"/>
    <property type="match status" value="1"/>
</dbReference>
<dbReference type="HAMAP" id="MF_00240">
    <property type="entry name" value="LolA"/>
    <property type="match status" value="1"/>
</dbReference>
<dbReference type="InterPro" id="IPR029046">
    <property type="entry name" value="LolA/LolB/LppX"/>
</dbReference>
<dbReference type="InterPro" id="IPR004564">
    <property type="entry name" value="OM_lipoprot_carrier_LolA-like"/>
</dbReference>
<dbReference type="InterPro" id="IPR018323">
    <property type="entry name" value="OM_lipoprot_carrier_LolA_Pbac"/>
</dbReference>
<dbReference type="NCBIfam" id="TIGR00547">
    <property type="entry name" value="lolA"/>
    <property type="match status" value="1"/>
</dbReference>
<dbReference type="PANTHER" id="PTHR35869">
    <property type="entry name" value="OUTER-MEMBRANE LIPOPROTEIN CARRIER PROTEIN"/>
    <property type="match status" value="1"/>
</dbReference>
<dbReference type="PANTHER" id="PTHR35869:SF1">
    <property type="entry name" value="OUTER-MEMBRANE LIPOPROTEIN CARRIER PROTEIN"/>
    <property type="match status" value="1"/>
</dbReference>
<dbReference type="Pfam" id="PF03548">
    <property type="entry name" value="LolA"/>
    <property type="match status" value="1"/>
</dbReference>
<dbReference type="SUPFAM" id="SSF89392">
    <property type="entry name" value="Prokaryotic lipoproteins and lipoprotein localization factors"/>
    <property type="match status" value="1"/>
</dbReference>
<name>LOLA_FRAT1</name>